<protein>
    <recommendedName>
        <fullName>Olfactory receptor 1J4</fullName>
    </recommendedName>
    <alternativeName>
        <fullName>HTPCRX01</fullName>
    </alternativeName>
    <alternativeName>
        <fullName>Olfactory receptor OR9-21</fullName>
    </alternativeName>
</protein>
<name>OR1J4_HUMAN</name>
<evidence type="ECO:0000255" key="1"/>
<evidence type="ECO:0000255" key="2">
    <source>
        <dbReference type="PROSITE-ProRule" id="PRU00521"/>
    </source>
</evidence>
<evidence type="ECO:0000305" key="3"/>
<proteinExistence type="evidence at transcript level"/>
<comment type="function">
    <text evidence="3">Odorant receptor.</text>
</comment>
<comment type="subcellular location">
    <subcellularLocation>
        <location>Cell membrane</location>
        <topology>Multi-pass membrane protein</topology>
    </subcellularLocation>
</comment>
<comment type="similarity">
    <text evidence="2">Belongs to the G-protein coupled receptor 1 family.</text>
</comment>
<comment type="online information" name="Human Olfactory Receptor Data Exploratorium (HORDE)">
    <link uri="http://genome.weizmann.ac.il/horde/card/index/symbol:OR1J4"/>
</comment>
<reference key="1">
    <citation type="submission" date="2001-07" db="EMBL/GenBank/DDBJ databases">
        <title>Genome-wide discovery and analysis of human seven transmembrane helix receptor genes.</title>
        <authorList>
            <person name="Suwa M."/>
            <person name="Sato T."/>
            <person name="Okouchi I."/>
            <person name="Arita M."/>
            <person name="Futami K."/>
            <person name="Matsumoto S."/>
            <person name="Tsutsumi S."/>
            <person name="Aburatani H."/>
            <person name="Asai K."/>
            <person name="Akiyama Y."/>
        </authorList>
    </citation>
    <scope>NUCLEOTIDE SEQUENCE [GENOMIC DNA]</scope>
</reference>
<reference key="2">
    <citation type="journal article" date="2004" name="Nature">
        <title>DNA sequence and analysis of human chromosome 9.</title>
        <authorList>
            <person name="Humphray S.J."/>
            <person name="Oliver K."/>
            <person name="Hunt A.R."/>
            <person name="Plumb R.W."/>
            <person name="Loveland J.E."/>
            <person name="Howe K.L."/>
            <person name="Andrews T.D."/>
            <person name="Searle S."/>
            <person name="Hunt S.E."/>
            <person name="Scott C.E."/>
            <person name="Jones M.C."/>
            <person name="Ainscough R."/>
            <person name="Almeida J.P."/>
            <person name="Ambrose K.D."/>
            <person name="Ashwell R.I.S."/>
            <person name="Babbage A.K."/>
            <person name="Babbage S."/>
            <person name="Bagguley C.L."/>
            <person name="Bailey J."/>
            <person name="Banerjee R."/>
            <person name="Barker D.J."/>
            <person name="Barlow K.F."/>
            <person name="Bates K."/>
            <person name="Beasley H."/>
            <person name="Beasley O."/>
            <person name="Bird C.P."/>
            <person name="Bray-Allen S."/>
            <person name="Brown A.J."/>
            <person name="Brown J.Y."/>
            <person name="Burford D."/>
            <person name="Burrill W."/>
            <person name="Burton J."/>
            <person name="Carder C."/>
            <person name="Carter N.P."/>
            <person name="Chapman J.C."/>
            <person name="Chen Y."/>
            <person name="Clarke G."/>
            <person name="Clark S.Y."/>
            <person name="Clee C.M."/>
            <person name="Clegg S."/>
            <person name="Collier R.E."/>
            <person name="Corby N."/>
            <person name="Crosier M."/>
            <person name="Cummings A.T."/>
            <person name="Davies J."/>
            <person name="Dhami P."/>
            <person name="Dunn M."/>
            <person name="Dutta I."/>
            <person name="Dyer L.W."/>
            <person name="Earthrowl M.E."/>
            <person name="Faulkner L."/>
            <person name="Fleming C.J."/>
            <person name="Frankish A."/>
            <person name="Frankland J.A."/>
            <person name="French L."/>
            <person name="Fricker D.G."/>
            <person name="Garner P."/>
            <person name="Garnett J."/>
            <person name="Ghori J."/>
            <person name="Gilbert J.G.R."/>
            <person name="Glison C."/>
            <person name="Grafham D.V."/>
            <person name="Gribble S."/>
            <person name="Griffiths C."/>
            <person name="Griffiths-Jones S."/>
            <person name="Grocock R."/>
            <person name="Guy J."/>
            <person name="Hall R.E."/>
            <person name="Hammond S."/>
            <person name="Harley J.L."/>
            <person name="Harrison E.S.I."/>
            <person name="Hart E.A."/>
            <person name="Heath P.D."/>
            <person name="Henderson C.D."/>
            <person name="Hopkins B.L."/>
            <person name="Howard P.J."/>
            <person name="Howden P.J."/>
            <person name="Huckle E."/>
            <person name="Johnson C."/>
            <person name="Johnson D."/>
            <person name="Joy A.A."/>
            <person name="Kay M."/>
            <person name="Keenan S."/>
            <person name="Kershaw J.K."/>
            <person name="Kimberley A.M."/>
            <person name="King A."/>
            <person name="Knights A."/>
            <person name="Laird G.K."/>
            <person name="Langford C."/>
            <person name="Lawlor S."/>
            <person name="Leongamornlert D.A."/>
            <person name="Leversha M."/>
            <person name="Lloyd C."/>
            <person name="Lloyd D.M."/>
            <person name="Lovell J."/>
            <person name="Martin S."/>
            <person name="Mashreghi-Mohammadi M."/>
            <person name="Matthews L."/>
            <person name="McLaren S."/>
            <person name="McLay K.E."/>
            <person name="McMurray A."/>
            <person name="Milne S."/>
            <person name="Nickerson T."/>
            <person name="Nisbett J."/>
            <person name="Nordsiek G."/>
            <person name="Pearce A.V."/>
            <person name="Peck A.I."/>
            <person name="Porter K.M."/>
            <person name="Pandian R."/>
            <person name="Pelan S."/>
            <person name="Phillimore B."/>
            <person name="Povey S."/>
            <person name="Ramsey Y."/>
            <person name="Rand V."/>
            <person name="Scharfe M."/>
            <person name="Sehra H.K."/>
            <person name="Shownkeen R."/>
            <person name="Sims S.K."/>
            <person name="Skuce C.D."/>
            <person name="Smith M."/>
            <person name="Steward C.A."/>
            <person name="Swarbreck D."/>
            <person name="Sycamore N."/>
            <person name="Tester J."/>
            <person name="Thorpe A."/>
            <person name="Tracey A."/>
            <person name="Tromans A."/>
            <person name="Thomas D.W."/>
            <person name="Wall M."/>
            <person name="Wallis J.M."/>
            <person name="West A.P."/>
            <person name="Whitehead S.L."/>
            <person name="Willey D.L."/>
            <person name="Williams S.A."/>
            <person name="Wilming L."/>
            <person name="Wray P.W."/>
            <person name="Young L."/>
            <person name="Ashurst J.L."/>
            <person name="Coulson A."/>
            <person name="Blocker H."/>
            <person name="Durbin R.M."/>
            <person name="Sulston J.E."/>
            <person name="Hubbard T."/>
            <person name="Jackson M.J."/>
            <person name="Bentley D.R."/>
            <person name="Beck S."/>
            <person name="Rogers J."/>
            <person name="Dunham I."/>
        </authorList>
    </citation>
    <scope>NUCLEOTIDE SEQUENCE [LARGE SCALE GENOMIC DNA]</scope>
</reference>
<reference key="3">
    <citation type="submission" date="2005-07" db="EMBL/GenBank/DDBJ databases">
        <authorList>
            <person name="Mural R.J."/>
            <person name="Istrail S."/>
            <person name="Sutton G.G."/>
            <person name="Florea L."/>
            <person name="Halpern A.L."/>
            <person name="Mobarry C.M."/>
            <person name="Lippert R."/>
            <person name="Walenz B."/>
            <person name="Shatkay H."/>
            <person name="Dew I."/>
            <person name="Miller J.R."/>
            <person name="Flanigan M.J."/>
            <person name="Edwards N.J."/>
            <person name="Bolanos R."/>
            <person name="Fasulo D."/>
            <person name="Halldorsson B.V."/>
            <person name="Hannenhalli S."/>
            <person name="Turner R."/>
            <person name="Yooseph S."/>
            <person name="Lu F."/>
            <person name="Nusskern D.R."/>
            <person name="Shue B.C."/>
            <person name="Zheng X.H."/>
            <person name="Zhong F."/>
            <person name="Delcher A.L."/>
            <person name="Huson D.H."/>
            <person name="Kravitz S.A."/>
            <person name="Mouchard L."/>
            <person name="Reinert K."/>
            <person name="Remington K.A."/>
            <person name="Clark A.G."/>
            <person name="Waterman M.S."/>
            <person name="Eichler E.E."/>
            <person name="Adams M.D."/>
            <person name="Hunkapiller M.W."/>
            <person name="Myers E.W."/>
            <person name="Venter J.C."/>
        </authorList>
    </citation>
    <scope>NUCLEOTIDE SEQUENCE [LARGE SCALE GENOMIC DNA]</scope>
</reference>
<reference key="4">
    <citation type="journal article" date="2002" name="Genomics">
        <title>DEFOG: a practical scheme for deciphering families of genes.</title>
        <authorList>
            <person name="Fuchs T."/>
            <person name="Malecova B."/>
            <person name="Linhart C."/>
            <person name="Sharan R."/>
            <person name="Khen M."/>
            <person name="Herwig R."/>
            <person name="Shmulevich D."/>
            <person name="Elkon R."/>
            <person name="Steinfath M."/>
            <person name="O'Brien J.K."/>
            <person name="Radelof U."/>
            <person name="Lehrach H."/>
            <person name="Lancet D."/>
            <person name="Shamir R."/>
        </authorList>
    </citation>
    <scope>NUCLEOTIDE SEQUENCE [GENOMIC DNA] OF 68-283</scope>
</reference>
<reference key="5">
    <citation type="journal article" date="1992" name="Nature">
        <title>Expression of members of the putative olfactory receptor gene family in mammalian germ cells.</title>
        <authorList>
            <person name="Parmentier M."/>
            <person name="Libert F."/>
            <person name="Schurmans S."/>
            <person name="Schiffmann S."/>
            <person name="Lefort A."/>
            <person name="Eggerickx D."/>
            <person name="Ledent C."/>
            <person name="Mollereau C."/>
            <person name="Gerard C."/>
            <person name="Perret J."/>
            <person name="Grootegoed A."/>
            <person name="Vassart G."/>
        </authorList>
    </citation>
    <scope>NUCLEOTIDE SEQUENCE [MRNA] OF 126-237</scope>
    <source>
        <tissue>Testis</tissue>
    </source>
</reference>
<reference key="6">
    <citation type="journal article" date="2004" name="Proc. Natl. Acad. Sci. U.S.A.">
        <title>The human olfactory receptor gene family.</title>
        <authorList>
            <person name="Malnic B."/>
            <person name="Godfrey P.A."/>
            <person name="Buck L.B."/>
        </authorList>
    </citation>
    <scope>IDENTIFICATION</scope>
</reference>
<reference key="7">
    <citation type="journal article" date="2004" name="Proc. Natl. Acad. Sci. U.S.A.">
        <authorList>
            <person name="Malnic B."/>
            <person name="Godfrey P.A."/>
            <person name="Buck L.B."/>
        </authorList>
    </citation>
    <scope>ERRATUM OF PUBMED:14983052</scope>
</reference>
<sequence length="313" mass="34959">MKRENQSSVSEFLLLDLPIWPEQQAVFFTLFLGMYLITVLGNLLIILLIRLDSHLHTPMFFFLSHLALTDISLSSVTVPKMLLSMQTQDQSILYAGCVTQMYFFIFFTDLDNFLLTSMAYDRYVAICHPLRYTTIMKEGLCNLLVTVSWILSCTNALSHTLLLAQLSFCADNTIPHFFCDLVALLKLSCSDISLNELVIFTVGQAVITLPLICILISYGHIGVTILKAPSTKGIFKALSTCGSHLSVVSLYYGTIIGLYFLPSSSASSDKDVIASVMYTVITPLLNPFIYSLRNRDIKGALERLFNRATVLSQ</sequence>
<feature type="chain" id="PRO_0000150440" description="Olfactory receptor 1J4">
    <location>
        <begin position="1"/>
        <end position="313"/>
    </location>
</feature>
<feature type="topological domain" description="Extracellular" evidence="1">
    <location>
        <begin position="1"/>
        <end position="25"/>
    </location>
</feature>
<feature type="transmembrane region" description="Helical; Name=1" evidence="1">
    <location>
        <begin position="26"/>
        <end position="49"/>
    </location>
</feature>
<feature type="topological domain" description="Cytoplasmic" evidence="1">
    <location>
        <begin position="50"/>
        <end position="57"/>
    </location>
</feature>
<feature type="transmembrane region" description="Helical; Name=2" evidence="1">
    <location>
        <begin position="58"/>
        <end position="79"/>
    </location>
</feature>
<feature type="topological domain" description="Extracellular" evidence="1">
    <location>
        <begin position="80"/>
        <end position="100"/>
    </location>
</feature>
<feature type="transmembrane region" description="Helical; Name=3" evidence="1">
    <location>
        <begin position="101"/>
        <end position="120"/>
    </location>
</feature>
<feature type="topological domain" description="Cytoplasmic" evidence="1">
    <location>
        <begin position="121"/>
        <end position="139"/>
    </location>
</feature>
<feature type="transmembrane region" description="Helical; Name=4" evidence="1">
    <location>
        <begin position="140"/>
        <end position="158"/>
    </location>
</feature>
<feature type="topological domain" description="Extracellular" evidence="1">
    <location>
        <begin position="159"/>
        <end position="195"/>
    </location>
</feature>
<feature type="transmembrane region" description="Helical; Name=5" evidence="1">
    <location>
        <begin position="196"/>
        <end position="219"/>
    </location>
</feature>
<feature type="topological domain" description="Cytoplasmic" evidence="1">
    <location>
        <begin position="220"/>
        <end position="236"/>
    </location>
</feature>
<feature type="transmembrane region" description="Helical; Name=6" evidence="1">
    <location>
        <begin position="237"/>
        <end position="259"/>
    </location>
</feature>
<feature type="topological domain" description="Extracellular" evidence="1">
    <location>
        <begin position="260"/>
        <end position="272"/>
    </location>
</feature>
<feature type="transmembrane region" description="Helical; Name=7" evidence="1">
    <location>
        <begin position="273"/>
        <end position="292"/>
    </location>
</feature>
<feature type="topological domain" description="Cytoplasmic" evidence="1">
    <location>
        <begin position="293"/>
        <end position="313"/>
    </location>
</feature>
<feature type="glycosylation site" description="N-linked (GlcNAc...) asparagine" evidence="1">
    <location>
        <position position="5"/>
    </location>
</feature>
<feature type="disulfide bond" evidence="2">
    <location>
        <begin position="97"/>
        <end position="189"/>
    </location>
</feature>
<accession>Q8NGS1</accession>
<accession>A3KFM0</accession>
<accession>Q6IEZ3</accession>
<accession>Q96R89</accession>
<dbReference type="EMBL" id="AB065718">
    <property type="protein sequence ID" value="BAC05939.1"/>
    <property type="molecule type" value="Genomic_DNA"/>
</dbReference>
<dbReference type="EMBL" id="AL359636">
    <property type="status" value="NOT_ANNOTATED_CDS"/>
    <property type="molecule type" value="Genomic_DNA"/>
</dbReference>
<dbReference type="EMBL" id="CH471090">
    <property type="protein sequence ID" value="EAW87533.1"/>
    <property type="molecule type" value="Genomic_DNA"/>
</dbReference>
<dbReference type="EMBL" id="AF399553">
    <property type="protein sequence ID" value="AAK95038.1"/>
    <property type="molecule type" value="Genomic_DNA"/>
</dbReference>
<dbReference type="EMBL" id="X64979">
    <property type="status" value="NOT_ANNOTATED_CDS"/>
    <property type="molecule type" value="mRNA"/>
</dbReference>
<dbReference type="EMBL" id="BK004469">
    <property type="protein sequence ID" value="DAA04867.1"/>
    <property type="molecule type" value="Genomic_DNA"/>
</dbReference>
<dbReference type="CCDS" id="CCDS35122.1"/>
<dbReference type="RefSeq" id="NP_001004452.1">
    <property type="nucleotide sequence ID" value="NM_001004452.1"/>
</dbReference>
<dbReference type="SMR" id="Q8NGS1"/>
<dbReference type="FunCoup" id="Q8NGS1">
    <property type="interactions" value="468"/>
</dbReference>
<dbReference type="STRING" id="9606.ENSP00000343521"/>
<dbReference type="GlyCosmos" id="Q8NGS1">
    <property type="glycosylation" value="1 site, No reported glycans"/>
</dbReference>
<dbReference type="GlyGen" id="Q8NGS1">
    <property type="glycosylation" value="1 site"/>
</dbReference>
<dbReference type="BioMuta" id="OR1J4"/>
<dbReference type="DMDM" id="38372760"/>
<dbReference type="jPOST" id="Q8NGS1"/>
<dbReference type="MassIVE" id="Q8NGS1"/>
<dbReference type="PaxDb" id="9606-ENSP00000343521"/>
<dbReference type="PeptideAtlas" id="Q8NGS1"/>
<dbReference type="TopDownProteomics" id="Q8NGS1"/>
<dbReference type="Antibodypedia" id="52705">
    <property type="antibodies" value="75 antibodies from 18 providers"/>
</dbReference>
<dbReference type="DNASU" id="26219"/>
<dbReference type="Ensembl" id="ENST00000340750.1">
    <property type="protein sequence ID" value="ENSP00000343521.1"/>
    <property type="gene ID" value="ENSG00000239590.1"/>
</dbReference>
<dbReference type="GeneID" id="26219"/>
<dbReference type="KEGG" id="hsa:26219"/>
<dbReference type="MANE-Select" id="ENST00000340750.1">
    <property type="protein sequence ID" value="ENSP00000343521.1"/>
    <property type="RefSeq nucleotide sequence ID" value="NM_001004452.1"/>
    <property type="RefSeq protein sequence ID" value="NP_001004452.1"/>
</dbReference>
<dbReference type="UCSC" id="uc011lyw.2">
    <property type="organism name" value="human"/>
</dbReference>
<dbReference type="AGR" id="HGNC:8211"/>
<dbReference type="CTD" id="26219"/>
<dbReference type="GeneCards" id="OR1J4"/>
<dbReference type="HGNC" id="HGNC:8211">
    <property type="gene designation" value="OR1J4"/>
</dbReference>
<dbReference type="HPA" id="ENSG00000239590">
    <property type="expression patterns" value="Not detected"/>
</dbReference>
<dbReference type="neXtProt" id="NX_Q8NGS1"/>
<dbReference type="PharmGKB" id="PA32081"/>
<dbReference type="VEuPathDB" id="HostDB:ENSG00000239590"/>
<dbReference type="eggNOG" id="ENOG502T8AD">
    <property type="taxonomic scope" value="Eukaryota"/>
</dbReference>
<dbReference type="GeneTree" id="ENSGT00940000162508"/>
<dbReference type="HOGENOM" id="CLU_012526_0_1_1"/>
<dbReference type="InParanoid" id="Q8NGS1"/>
<dbReference type="OMA" id="MLINMHF"/>
<dbReference type="OrthoDB" id="9975554at2759"/>
<dbReference type="PAN-GO" id="Q8NGS1">
    <property type="GO annotations" value="3 GO annotations based on evolutionary models"/>
</dbReference>
<dbReference type="PhylomeDB" id="Q8NGS1"/>
<dbReference type="TreeFam" id="TF337210"/>
<dbReference type="PathwayCommons" id="Q8NGS1"/>
<dbReference type="Reactome" id="R-HSA-9752946">
    <property type="pathway name" value="Expression and translocation of olfactory receptors"/>
</dbReference>
<dbReference type="BioGRID-ORCS" id="26219">
    <property type="hits" value="76 hits in 741 CRISPR screens"/>
</dbReference>
<dbReference type="GeneWiki" id="OR1J4"/>
<dbReference type="GenomeRNAi" id="26219"/>
<dbReference type="Pharos" id="Q8NGS1">
    <property type="development level" value="Tdark"/>
</dbReference>
<dbReference type="PRO" id="PR:Q8NGS1"/>
<dbReference type="Proteomes" id="UP000005640">
    <property type="component" value="Chromosome 9"/>
</dbReference>
<dbReference type="RNAct" id="Q8NGS1">
    <property type="molecule type" value="protein"/>
</dbReference>
<dbReference type="Bgee" id="ENSG00000239590">
    <property type="expression patterns" value="Expressed in endometrium and 3 other cell types or tissues"/>
</dbReference>
<dbReference type="ExpressionAtlas" id="Q8NGS1">
    <property type="expression patterns" value="baseline and differential"/>
</dbReference>
<dbReference type="GO" id="GO:0005886">
    <property type="term" value="C:plasma membrane"/>
    <property type="evidence" value="ECO:0000318"/>
    <property type="project" value="GO_Central"/>
</dbReference>
<dbReference type="GO" id="GO:0004930">
    <property type="term" value="F:G protein-coupled receptor activity"/>
    <property type="evidence" value="ECO:0007669"/>
    <property type="project" value="UniProtKB-KW"/>
</dbReference>
<dbReference type="GO" id="GO:0004984">
    <property type="term" value="F:olfactory receptor activity"/>
    <property type="evidence" value="ECO:0000318"/>
    <property type="project" value="GO_Central"/>
</dbReference>
<dbReference type="GO" id="GO:0007165">
    <property type="term" value="P:signal transduction"/>
    <property type="evidence" value="ECO:0000318"/>
    <property type="project" value="GO_Central"/>
</dbReference>
<dbReference type="CDD" id="cd15918">
    <property type="entry name" value="7tmA_OR1_7-like"/>
    <property type="match status" value="1"/>
</dbReference>
<dbReference type="FunFam" id="1.20.1070.10:FF:000009">
    <property type="entry name" value="Olfactory receptor"/>
    <property type="match status" value="1"/>
</dbReference>
<dbReference type="Gene3D" id="1.20.1070.10">
    <property type="entry name" value="Rhodopsin 7-helix transmembrane proteins"/>
    <property type="match status" value="1"/>
</dbReference>
<dbReference type="InterPro" id="IPR000276">
    <property type="entry name" value="GPCR_Rhodpsn"/>
</dbReference>
<dbReference type="InterPro" id="IPR017452">
    <property type="entry name" value="GPCR_Rhodpsn_7TM"/>
</dbReference>
<dbReference type="InterPro" id="IPR000725">
    <property type="entry name" value="Olfact_rcpt"/>
</dbReference>
<dbReference type="PANTHER" id="PTHR48001">
    <property type="entry name" value="OLFACTORY RECEPTOR"/>
    <property type="match status" value="1"/>
</dbReference>
<dbReference type="Pfam" id="PF13853">
    <property type="entry name" value="7tm_4"/>
    <property type="match status" value="1"/>
</dbReference>
<dbReference type="PRINTS" id="PR00237">
    <property type="entry name" value="GPCRRHODOPSN"/>
</dbReference>
<dbReference type="PRINTS" id="PR00245">
    <property type="entry name" value="OLFACTORYR"/>
</dbReference>
<dbReference type="SUPFAM" id="SSF81321">
    <property type="entry name" value="Family A G protein-coupled receptor-like"/>
    <property type="match status" value="1"/>
</dbReference>
<dbReference type="PROSITE" id="PS00237">
    <property type="entry name" value="G_PROTEIN_RECEP_F1_1"/>
    <property type="match status" value="1"/>
</dbReference>
<dbReference type="PROSITE" id="PS50262">
    <property type="entry name" value="G_PROTEIN_RECEP_F1_2"/>
    <property type="match status" value="1"/>
</dbReference>
<gene>
    <name type="primary">OR1J4</name>
</gene>
<keyword id="KW-1003">Cell membrane</keyword>
<keyword id="KW-1015">Disulfide bond</keyword>
<keyword id="KW-0297">G-protein coupled receptor</keyword>
<keyword id="KW-0325">Glycoprotein</keyword>
<keyword id="KW-0472">Membrane</keyword>
<keyword id="KW-0552">Olfaction</keyword>
<keyword id="KW-0675">Receptor</keyword>
<keyword id="KW-1185">Reference proteome</keyword>
<keyword id="KW-0716">Sensory transduction</keyword>
<keyword id="KW-0807">Transducer</keyword>
<keyword id="KW-0812">Transmembrane</keyword>
<keyword id="KW-1133">Transmembrane helix</keyword>
<organism>
    <name type="scientific">Homo sapiens</name>
    <name type="common">Human</name>
    <dbReference type="NCBI Taxonomy" id="9606"/>
    <lineage>
        <taxon>Eukaryota</taxon>
        <taxon>Metazoa</taxon>
        <taxon>Chordata</taxon>
        <taxon>Craniata</taxon>
        <taxon>Vertebrata</taxon>
        <taxon>Euteleostomi</taxon>
        <taxon>Mammalia</taxon>
        <taxon>Eutheria</taxon>
        <taxon>Euarchontoglires</taxon>
        <taxon>Primates</taxon>
        <taxon>Haplorrhini</taxon>
        <taxon>Catarrhini</taxon>
        <taxon>Hominidae</taxon>
        <taxon>Homo</taxon>
    </lineage>
</organism>